<proteinExistence type="evidence at transcript level"/>
<sequence length="152" mass="16710">MSSGGLLLLLGFLTLWAELTPVSGQDPPRFCSLPAETGECRGRIPRFYYNSASKQCEQFFYSGCGGNANNFETKDQCHYTCVEKPGVCPPRPQQQGQEGKNCENDWKCPGQQKCCRYRGKTECKDAVFEKFASTTRTPTSIGSTPVGSSVPT</sequence>
<name>VKT_SISCA</name>
<evidence type="ECO:0000250" key="1"/>
<evidence type="ECO:0000255" key="2">
    <source>
        <dbReference type="PROSITE-ProRule" id="PRU00031"/>
    </source>
</evidence>
<evidence type="ECO:0000255" key="3">
    <source>
        <dbReference type="PROSITE-ProRule" id="PRU00722"/>
    </source>
</evidence>
<evidence type="ECO:0000305" key="4"/>
<protein>
    <recommendedName>
        <fullName>Fused toxin protein</fullName>
    </recommendedName>
</protein>
<organism>
    <name type="scientific">Sistrurus catenatus edwardsii</name>
    <name type="common">Desert massasauga</name>
    <name type="synonym">Crotalophorus edwardsii</name>
    <dbReference type="NCBI Taxonomy" id="8762"/>
    <lineage>
        <taxon>Eukaryota</taxon>
        <taxon>Metazoa</taxon>
        <taxon>Chordata</taxon>
        <taxon>Craniata</taxon>
        <taxon>Vertebrata</taxon>
        <taxon>Euteleostomi</taxon>
        <taxon>Lepidosauria</taxon>
        <taxon>Squamata</taxon>
        <taxon>Bifurcata</taxon>
        <taxon>Unidentata</taxon>
        <taxon>Episquamata</taxon>
        <taxon>Toxicofera</taxon>
        <taxon>Serpentes</taxon>
        <taxon>Colubroidea</taxon>
        <taxon>Viperidae</taxon>
        <taxon>Crotalinae</taxon>
        <taxon>Sistrurus</taxon>
    </lineage>
</organism>
<dbReference type="EMBL" id="DQ464286">
    <property type="protein sequence ID" value="ABG27009.1"/>
    <property type="molecule type" value="mRNA"/>
</dbReference>
<dbReference type="SMR" id="A5X2X1"/>
<dbReference type="MEROPS" id="I02.062"/>
<dbReference type="GO" id="GO:0005615">
    <property type="term" value="C:extracellular space"/>
    <property type="evidence" value="ECO:0007669"/>
    <property type="project" value="TreeGrafter"/>
</dbReference>
<dbReference type="GO" id="GO:0004867">
    <property type="term" value="F:serine-type endopeptidase inhibitor activity"/>
    <property type="evidence" value="ECO:0007669"/>
    <property type="project" value="UniProtKB-KW"/>
</dbReference>
<dbReference type="CDD" id="cd22608">
    <property type="entry name" value="Kunitz_PPTI-like"/>
    <property type="match status" value="1"/>
</dbReference>
<dbReference type="FunFam" id="4.10.410.10:FF:000021">
    <property type="entry name" value="Serine protease inhibitor, putative"/>
    <property type="match status" value="1"/>
</dbReference>
<dbReference type="Gene3D" id="4.10.75.10">
    <property type="entry name" value="Elafin-like"/>
    <property type="match status" value="1"/>
</dbReference>
<dbReference type="Gene3D" id="4.10.410.10">
    <property type="entry name" value="Pancreatic trypsin inhibitor Kunitz domain"/>
    <property type="match status" value="1"/>
</dbReference>
<dbReference type="InterPro" id="IPR036645">
    <property type="entry name" value="Elafin-like_sf"/>
</dbReference>
<dbReference type="InterPro" id="IPR002223">
    <property type="entry name" value="Kunitz_BPTI"/>
</dbReference>
<dbReference type="InterPro" id="IPR036880">
    <property type="entry name" value="Kunitz_BPTI_sf"/>
</dbReference>
<dbReference type="InterPro" id="IPR020901">
    <property type="entry name" value="Prtase_inh_Kunz-CS"/>
</dbReference>
<dbReference type="InterPro" id="IPR050098">
    <property type="entry name" value="TFPI/VKTCI-like"/>
</dbReference>
<dbReference type="InterPro" id="IPR008197">
    <property type="entry name" value="WAP_dom"/>
</dbReference>
<dbReference type="PANTHER" id="PTHR10083">
    <property type="entry name" value="KUNITZ-TYPE PROTEASE INHIBITOR-RELATED"/>
    <property type="match status" value="1"/>
</dbReference>
<dbReference type="PANTHER" id="PTHR10083:SF376">
    <property type="entry name" value="SERINE PEPTIDASE INHIBITOR, KUNITZ TYPE, 3"/>
    <property type="match status" value="1"/>
</dbReference>
<dbReference type="Pfam" id="PF00014">
    <property type="entry name" value="Kunitz_BPTI"/>
    <property type="match status" value="1"/>
</dbReference>
<dbReference type="Pfam" id="PF00095">
    <property type="entry name" value="WAP"/>
    <property type="match status" value="1"/>
</dbReference>
<dbReference type="PRINTS" id="PR00759">
    <property type="entry name" value="BASICPTASE"/>
</dbReference>
<dbReference type="SMART" id="SM00131">
    <property type="entry name" value="KU"/>
    <property type="match status" value="1"/>
</dbReference>
<dbReference type="SMART" id="SM00217">
    <property type="entry name" value="WAP"/>
    <property type="match status" value="1"/>
</dbReference>
<dbReference type="SUPFAM" id="SSF57362">
    <property type="entry name" value="BPTI-like"/>
    <property type="match status" value="1"/>
</dbReference>
<dbReference type="SUPFAM" id="SSF57256">
    <property type="entry name" value="Elafin-like"/>
    <property type="match status" value="1"/>
</dbReference>
<dbReference type="PROSITE" id="PS00280">
    <property type="entry name" value="BPTI_KUNITZ_1"/>
    <property type="match status" value="1"/>
</dbReference>
<dbReference type="PROSITE" id="PS50279">
    <property type="entry name" value="BPTI_KUNITZ_2"/>
    <property type="match status" value="1"/>
</dbReference>
<dbReference type="PROSITE" id="PS51390">
    <property type="entry name" value="WAP"/>
    <property type="match status" value="1"/>
</dbReference>
<accession>A5X2X1</accession>
<reference key="1">
    <citation type="journal article" date="2007" name="BMC Mol. Biol.">
        <title>The venom gland transcriptome of the Desert Massasauga rattlesnake (Sistrurus catenatus edwardsii): towards an understanding of venom composition among advanced snakes (Superfamily Colubroidea).</title>
        <authorList>
            <person name="Pahari S."/>
            <person name="Mackessy S.P."/>
            <person name="Kini R.M."/>
        </authorList>
    </citation>
    <scope>NUCLEOTIDE SEQUENCE [LARGE SCALE MRNA]</scope>
    <source>
        <tissue>Venom gland</tissue>
    </source>
</reference>
<feature type="signal peptide" evidence="1">
    <location>
        <begin position="1"/>
        <end position="24"/>
    </location>
</feature>
<feature type="chain" id="PRO_0000376906" description="Fused toxin protein">
    <location>
        <begin position="25"/>
        <end position="152"/>
    </location>
</feature>
<feature type="domain" description="BPTI/Kunitz inhibitor" evidence="2">
    <location>
        <begin position="31"/>
        <end position="81"/>
    </location>
</feature>
<feature type="domain" description="WAP; atypical" evidence="3">
    <location>
        <begin position="81"/>
        <end position="127"/>
    </location>
</feature>
<feature type="site" description="Reactive bond for trypsin" evidence="1">
    <location>
        <begin position="41"/>
        <end position="42"/>
    </location>
</feature>
<feature type="modified residue" description="Pyrrolidone carboxylic acid" evidence="1">
    <location>
        <position position="25"/>
    </location>
</feature>
<feature type="disulfide bond" evidence="1">
    <location>
        <begin position="31"/>
        <end position="81"/>
    </location>
</feature>
<feature type="disulfide bond" evidence="1">
    <location>
        <begin position="40"/>
        <end position="64"/>
    </location>
</feature>
<feature type="disulfide bond" evidence="1">
    <location>
        <begin position="56"/>
        <end position="77"/>
    </location>
</feature>
<feature type="disulfide bond" evidence="1">
    <location>
        <begin position="88"/>
        <end position="115"/>
    </location>
</feature>
<feature type="disulfide bond" evidence="1">
    <location>
        <begin position="102"/>
        <end position="114"/>
    </location>
</feature>
<feature type="disulfide bond" evidence="1">
    <location>
        <begin position="108"/>
        <end position="123"/>
    </location>
</feature>
<comment type="subcellular location">
    <subcellularLocation>
        <location evidence="1">Secreted</location>
    </subcellularLocation>
</comment>
<comment type="tissue specificity">
    <text>Expressed by the venom gland.</text>
</comment>
<comment type="miscellaneous">
    <text>May code either for a precursor which is processed to form two individual classes of venom proteins (Kunitz/BPTI and waprin) or a novel toxin with two distinct domains and having a new biological function.</text>
</comment>
<comment type="similarity">
    <text evidence="4">Belongs to the venom Kunitz-type family.</text>
</comment>
<keyword id="KW-1015">Disulfide bond</keyword>
<keyword id="KW-0646">Protease inhibitor</keyword>
<keyword id="KW-0873">Pyrrolidone carboxylic acid</keyword>
<keyword id="KW-0964">Secreted</keyword>
<keyword id="KW-0722">Serine protease inhibitor</keyword>
<keyword id="KW-0732">Signal</keyword>